<sequence length="73" mass="8142">MKKDIHPDYHMIDVKLTDGTVIQMKSTWGKEGDTLSLEIDPSSHPAWTGGSSRLMDTGGRVSKFKKKYEGLGF</sequence>
<protein>
    <recommendedName>
        <fullName evidence="2">Large ribosomal subunit protein bL31</fullName>
    </recommendedName>
    <alternativeName>
        <fullName>50S ribosomal protein L31</fullName>
    </alternativeName>
</protein>
<dbReference type="EMBL" id="CP000031">
    <property type="protein sequence ID" value="AAV96491.1"/>
    <property type="molecule type" value="Genomic_DNA"/>
</dbReference>
<dbReference type="RefSeq" id="WP_011048946.1">
    <property type="nucleotide sequence ID" value="NC_003911.12"/>
</dbReference>
<dbReference type="SMR" id="Q5LNE9"/>
<dbReference type="STRING" id="246200.SPO3256"/>
<dbReference type="PaxDb" id="246200-SPO3256"/>
<dbReference type="KEGG" id="sil:SPO3256"/>
<dbReference type="eggNOG" id="COG0254">
    <property type="taxonomic scope" value="Bacteria"/>
</dbReference>
<dbReference type="HOGENOM" id="CLU_114306_3_2_5"/>
<dbReference type="OrthoDB" id="9803251at2"/>
<dbReference type="Proteomes" id="UP000001023">
    <property type="component" value="Chromosome"/>
</dbReference>
<dbReference type="GO" id="GO:1990904">
    <property type="term" value="C:ribonucleoprotein complex"/>
    <property type="evidence" value="ECO:0007669"/>
    <property type="project" value="UniProtKB-KW"/>
</dbReference>
<dbReference type="GO" id="GO:0005840">
    <property type="term" value="C:ribosome"/>
    <property type="evidence" value="ECO:0007669"/>
    <property type="project" value="UniProtKB-KW"/>
</dbReference>
<dbReference type="GO" id="GO:0019843">
    <property type="term" value="F:rRNA binding"/>
    <property type="evidence" value="ECO:0007669"/>
    <property type="project" value="UniProtKB-KW"/>
</dbReference>
<dbReference type="GO" id="GO:0003735">
    <property type="term" value="F:structural constituent of ribosome"/>
    <property type="evidence" value="ECO:0007669"/>
    <property type="project" value="InterPro"/>
</dbReference>
<dbReference type="GO" id="GO:0006412">
    <property type="term" value="P:translation"/>
    <property type="evidence" value="ECO:0007669"/>
    <property type="project" value="InterPro"/>
</dbReference>
<dbReference type="Gene3D" id="4.10.830.30">
    <property type="entry name" value="Ribosomal protein L31"/>
    <property type="match status" value="1"/>
</dbReference>
<dbReference type="InterPro" id="IPR034704">
    <property type="entry name" value="Ribosomal_bL28/bL31-like_sf"/>
</dbReference>
<dbReference type="InterPro" id="IPR002150">
    <property type="entry name" value="Ribosomal_bL31"/>
</dbReference>
<dbReference type="InterPro" id="IPR042105">
    <property type="entry name" value="Ribosomal_bL31_sf"/>
</dbReference>
<dbReference type="NCBIfam" id="TIGR00105">
    <property type="entry name" value="L31"/>
    <property type="match status" value="1"/>
</dbReference>
<dbReference type="NCBIfam" id="NF001809">
    <property type="entry name" value="PRK00528.1"/>
    <property type="match status" value="1"/>
</dbReference>
<dbReference type="PANTHER" id="PTHR33280">
    <property type="entry name" value="50S RIBOSOMAL PROTEIN L31, CHLOROPLASTIC"/>
    <property type="match status" value="1"/>
</dbReference>
<dbReference type="PANTHER" id="PTHR33280:SF6">
    <property type="entry name" value="LARGE RIBOSOMAL SUBUNIT PROTEIN BL31A"/>
    <property type="match status" value="1"/>
</dbReference>
<dbReference type="Pfam" id="PF01197">
    <property type="entry name" value="Ribosomal_L31"/>
    <property type="match status" value="1"/>
</dbReference>
<dbReference type="PRINTS" id="PR01249">
    <property type="entry name" value="RIBOSOMALL31"/>
</dbReference>
<dbReference type="SUPFAM" id="SSF143800">
    <property type="entry name" value="L28p-like"/>
    <property type="match status" value="1"/>
</dbReference>
<dbReference type="PROSITE" id="PS01143">
    <property type="entry name" value="RIBOSOMAL_L31"/>
    <property type="match status" value="1"/>
</dbReference>
<evidence type="ECO:0000250" key="1"/>
<evidence type="ECO:0000305" key="2"/>
<keyword id="KW-1185">Reference proteome</keyword>
<keyword id="KW-0687">Ribonucleoprotein</keyword>
<keyword id="KW-0689">Ribosomal protein</keyword>
<keyword id="KW-0694">RNA-binding</keyword>
<keyword id="KW-0699">rRNA-binding</keyword>
<comment type="function">
    <text evidence="1">Binds the 23S rRNA.</text>
</comment>
<comment type="subunit">
    <text evidence="1">Part of the 50S ribosomal subunit.</text>
</comment>
<comment type="similarity">
    <text evidence="2">Belongs to the bacterial ribosomal protein bL31 family. Type A subfamily.</text>
</comment>
<proteinExistence type="inferred from homology"/>
<name>RL31_RUEPO</name>
<feature type="chain" id="PRO_0000173162" description="Large ribosomal subunit protein bL31">
    <location>
        <begin position="1"/>
        <end position="73"/>
    </location>
</feature>
<gene>
    <name type="primary">rpmE</name>
    <name type="ordered locus">SPO3256</name>
</gene>
<organism>
    <name type="scientific">Ruegeria pomeroyi (strain ATCC 700808 / DSM 15171 / DSS-3)</name>
    <name type="common">Silicibacter pomeroyi</name>
    <dbReference type="NCBI Taxonomy" id="246200"/>
    <lineage>
        <taxon>Bacteria</taxon>
        <taxon>Pseudomonadati</taxon>
        <taxon>Pseudomonadota</taxon>
        <taxon>Alphaproteobacteria</taxon>
        <taxon>Rhodobacterales</taxon>
        <taxon>Roseobacteraceae</taxon>
        <taxon>Ruegeria</taxon>
    </lineage>
</organism>
<reference key="1">
    <citation type="journal article" date="2004" name="Nature">
        <title>Genome sequence of Silicibacter pomeroyi reveals adaptations to the marine environment.</title>
        <authorList>
            <person name="Moran M.A."/>
            <person name="Buchan A."/>
            <person name="Gonzalez J.M."/>
            <person name="Heidelberg J.F."/>
            <person name="Whitman W.B."/>
            <person name="Kiene R.P."/>
            <person name="Henriksen J.R."/>
            <person name="King G.M."/>
            <person name="Belas R."/>
            <person name="Fuqua C."/>
            <person name="Brinkac L.M."/>
            <person name="Lewis M."/>
            <person name="Johri S."/>
            <person name="Weaver B."/>
            <person name="Pai G."/>
            <person name="Eisen J.A."/>
            <person name="Rahe E."/>
            <person name="Sheldon W.M."/>
            <person name="Ye W."/>
            <person name="Miller T.R."/>
            <person name="Carlton J."/>
            <person name="Rasko D.A."/>
            <person name="Paulsen I.T."/>
            <person name="Ren Q."/>
            <person name="Daugherty S.C."/>
            <person name="DeBoy R.T."/>
            <person name="Dodson R.J."/>
            <person name="Durkin A.S."/>
            <person name="Madupu R."/>
            <person name="Nelson W.C."/>
            <person name="Sullivan S.A."/>
            <person name="Rosovitz M.J."/>
            <person name="Haft D.H."/>
            <person name="Selengut J."/>
            <person name="Ward N."/>
        </authorList>
    </citation>
    <scope>NUCLEOTIDE SEQUENCE [LARGE SCALE GENOMIC DNA]</scope>
    <source>
        <strain>ATCC 700808 / DSM 15171 / DSS-3</strain>
    </source>
</reference>
<reference key="2">
    <citation type="journal article" date="2014" name="Stand. Genomic Sci.">
        <title>An updated genome annotation for the model marine bacterium Ruegeria pomeroyi DSS-3.</title>
        <authorList>
            <person name="Rivers A.R."/>
            <person name="Smith C.B."/>
            <person name="Moran M.A."/>
        </authorList>
    </citation>
    <scope>GENOME REANNOTATION</scope>
    <source>
        <strain>ATCC 700808 / DSM 15171 / DSS-3</strain>
    </source>
</reference>
<accession>Q5LNE9</accession>